<feature type="chain" id="PRO_0000051384" description="WD repeat-containing protein 35">
    <location>
        <begin position="1"/>
        <end position="1181"/>
    </location>
</feature>
<feature type="repeat" description="WD 1">
    <location>
        <begin position="4"/>
        <end position="43"/>
    </location>
</feature>
<feature type="repeat" description="WD 2">
    <location>
        <begin position="61"/>
        <end position="100"/>
    </location>
</feature>
<feature type="repeat" description="WD 3">
    <location>
        <begin position="105"/>
        <end position="143"/>
    </location>
</feature>
<feature type="repeat" description="WD 4">
    <location>
        <begin position="147"/>
        <end position="185"/>
    </location>
</feature>
<feature type="repeat" description="WD 5">
    <location>
        <begin position="193"/>
        <end position="241"/>
    </location>
</feature>
<feature type="repeat" description="WD 6">
    <location>
        <begin position="246"/>
        <end position="288"/>
    </location>
</feature>
<feature type="splice variant" id="VSP_009732" description="In isoform 2." evidence="13 14">
    <location>
        <begin position="399"/>
        <end position="409"/>
    </location>
</feature>
<feature type="sequence variant" id="VAR_053428" description="In dbSNP:rs1060742.">
    <original>Q</original>
    <variation>R</variation>
    <location>
        <position position="18"/>
    </location>
</feature>
<feature type="sequence variant" id="VAR_065955" description="In SRTD7; dbSNP:rs431905505." evidence="8">
    <original>W</original>
    <variation>R</variation>
    <location>
        <position position="261"/>
    </location>
</feature>
<feature type="sequence variant" id="VAR_076784" description="In SRTD7 and SRTD7/20; the SRTD7/20 patient also carries variant INTU 276-Q--L-942 del; chondrocyte cell lines from a patient show a reduction of cilia indicating a defect in ciliogenesis; dbSNP:rs200649783." evidence="9 11">
    <original>W</original>
    <variation>L</variation>
    <location>
        <position position="311"/>
    </location>
</feature>
<feature type="sequence variant" id="VAR_080632" description="In SRTD7; chondrocyte cell lines from the patient show a reduction of cilia indicating a defect in ciliogenesis; dbSNP:rs1558342399." evidence="11">
    <original>R</original>
    <variation>K</variation>
    <location>
        <position position="478"/>
    </location>
</feature>
<feature type="sequence variant" id="VAR_080633" description="In SRTD7; chondrocyte cell lines from the patient show a reduction of cilia indicating a defect in ciliogenesis." evidence="11">
    <location>
        <begin position="527"/>
        <end position="1181"/>
    </location>
</feature>
<feature type="sequence variant" id="VAR_064581" description="In CED2; dbSNP:rs267607174." evidence="6">
    <original>E</original>
    <variation>G</variation>
    <location>
        <position position="626"/>
    </location>
</feature>
<feature type="sequence variant" id="VAR_064582" description="In CED2; dbSNP:rs267607175." evidence="6">
    <original>A</original>
    <variation>T</variation>
    <location>
        <position position="875"/>
    </location>
</feature>
<feature type="sequence variant" id="VAR_062102" description="In dbSNP:rs2293669.">
    <original>A</original>
    <variation>P</variation>
    <location>
        <position position="878"/>
    </location>
</feature>
<feature type="sequence variant" id="VAR_062103" description="In dbSNP:rs2293669." evidence="3">
    <original>A</original>
    <variation>T</variation>
    <location>
        <position position="878"/>
    </location>
</feature>
<feature type="sequence variant" id="VAR_053429" description="In dbSNP:rs1191778." evidence="2">
    <original>E</original>
    <variation>G</variation>
    <location>
        <position position="983"/>
    </location>
</feature>
<feature type="sequence conflict" description="In Ref. 6; AAH36659." evidence="17" ref="6">
    <original>S</original>
    <variation>G</variation>
    <location>
        <position position="1078"/>
    </location>
</feature>
<feature type="sequence conflict" description="In Ref. 3; BAG53797." evidence="17" ref="3">
    <original>S</original>
    <variation>G</variation>
    <location>
        <position position="1171"/>
    </location>
</feature>
<feature type="strand" evidence="19">
    <location>
        <begin position="2"/>
        <end position="10"/>
    </location>
</feature>
<feature type="helix" evidence="19">
    <location>
        <begin position="12"/>
        <end position="14"/>
    </location>
</feature>
<feature type="strand" evidence="19">
    <location>
        <begin position="17"/>
        <end position="22"/>
    </location>
</feature>
<feature type="strand" evidence="19">
    <location>
        <begin position="24"/>
        <end position="26"/>
    </location>
</feature>
<feature type="strand" evidence="19">
    <location>
        <begin position="29"/>
        <end position="34"/>
    </location>
</feature>
<feature type="strand" evidence="19">
    <location>
        <begin position="38"/>
        <end position="42"/>
    </location>
</feature>
<feature type="strand" evidence="19">
    <location>
        <begin position="62"/>
        <end position="67"/>
    </location>
</feature>
<feature type="strand" evidence="19">
    <location>
        <begin position="76"/>
        <end position="80"/>
    </location>
</feature>
<feature type="turn" evidence="19">
    <location>
        <begin position="81"/>
        <end position="84"/>
    </location>
</feature>
<feature type="strand" evidence="19">
    <location>
        <begin position="85"/>
        <end position="89"/>
    </location>
</feature>
<feature type="strand" evidence="19">
    <location>
        <begin position="94"/>
        <end position="101"/>
    </location>
</feature>
<feature type="strand" evidence="19">
    <location>
        <begin position="104"/>
        <end position="112"/>
    </location>
</feature>
<feature type="strand" evidence="19">
    <location>
        <begin position="114"/>
        <end position="116"/>
    </location>
</feature>
<feature type="strand" evidence="19">
    <location>
        <begin position="118"/>
        <end position="123"/>
    </location>
</feature>
<feature type="strand" evidence="19">
    <location>
        <begin position="127"/>
        <end position="143"/>
    </location>
</feature>
<feature type="strand" evidence="19">
    <location>
        <begin position="148"/>
        <end position="150"/>
    </location>
</feature>
<feature type="strand" evidence="19">
    <location>
        <begin position="162"/>
        <end position="164"/>
    </location>
</feature>
<feature type="strand" evidence="19">
    <location>
        <begin position="168"/>
        <end position="175"/>
    </location>
</feature>
<feature type="turn" evidence="19">
    <location>
        <begin position="176"/>
        <end position="178"/>
    </location>
</feature>
<feature type="strand" evidence="19">
    <location>
        <begin position="179"/>
        <end position="184"/>
    </location>
</feature>
<feature type="strand" evidence="19">
    <location>
        <begin position="189"/>
        <end position="192"/>
    </location>
</feature>
<feature type="helix" evidence="19">
    <location>
        <begin position="196"/>
        <end position="198"/>
    </location>
</feature>
<feature type="strand" evidence="19">
    <location>
        <begin position="207"/>
        <end position="212"/>
    </location>
</feature>
<feature type="strand" evidence="19">
    <location>
        <begin position="227"/>
        <end position="231"/>
    </location>
</feature>
<feature type="strand" evidence="19">
    <location>
        <begin position="234"/>
        <end position="241"/>
    </location>
</feature>
<feature type="strand" evidence="19">
    <location>
        <begin position="248"/>
        <end position="251"/>
    </location>
</feature>
<feature type="strand" evidence="19">
    <location>
        <begin position="253"/>
        <end position="261"/>
    </location>
</feature>
<feature type="strand" evidence="19">
    <location>
        <begin position="268"/>
        <end position="275"/>
    </location>
</feature>
<feature type="strand" evidence="19">
    <location>
        <begin position="279"/>
        <end position="289"/>
    </location>
</feature>
<feature type="strand" evidence="19">
    <location>
        <begin position="295"/>
        <end position="301"/>
    </location>
</feature>
<feature type="strand" evidence="19">
    <location>
        <begin position="306"/>
        <end position="311"/>
    </location>
</feature>
<feature type="strand" evidence="19">
    <location>
        <begin position="315"/>
        <end position="322"/>
    </location>
</feature>
<feature type="strand" evidence="19">
    <location>
        <begin position="325"/>
        <end position="332"/>
    </location>
</feature>
<feature type="strand" evidence="19">
    <location>
        <begin position="336"/>
        <end position="340"/>
    </location>
</feature>
<feature type="strand" evidence="19">
    <location>
        <begin position="343"/>
        <end position="350"/>
    </location>
</feature>
<feature type="strand" evidence="19">
    <location>
        <begin position="353"/>
        <end position="362"/>
    </location>
</feature>
<feature type="turn" evidence="19">
    <location>
        <begin position="363"/>
        <end position="366"/>
    </location>
</feature>
<feature type="strand" evidence="19">
    <location>
        <begin position="367"/>
        <end position="382"/>
    </location>
</feature>
<feature type="strand" evidence="19">
    <location>
        <begin position="385"/>
        <end position="391"/>
    </location>
</feature>
<feature type="strand" evidence="19">
    <location>
        <begin position="410"/>
        <end position="416"/>
    </location>
</feature>
<feature type="strand" evidence="19">
    <location>
        <begin position="421"/>
        <end position="429"/>
    </location>
</feature>
<feature type="strand" evidence="19">
    <location>
        <begin position="433"/>
        <end position="436"/>
    </location>
</feature>
<feature type="strand" evidence="19">
    <location>
        <begin position="438"/>
        <end position="444"/>
    </location>
</feature>
<feature type="strand" evidence="19">
    <location>
        <begin position="446"/>
        <end position="453"/>
    </location>
</feature>
<feature type="helix" evidence="19">
    <location>
        <begin position="474"/>
        <end position="476"/>
    </location>
</feature>
<feature type="strand" evidence="19">
    <location>
        <begin position="477"/>
        <end position="481"/>
    </location>
</feature>
<feature type="helix" evidence="19">
    <location>
        <begin position="496"/>
        <end position="500"/>
    </location>
</feature>
<feature type="strand" evidence="19">
    <location>
        <begin position="507"/>
        <end position="512"/>
    </location>
</feature>
<feature type="strand" evidence="19">
    <location>
        <begin position="514"/>
        <end position="521"/>
    </location>
</feature>
<feature type="strand" evidence="19">
    <location>
        <begin position="524"/>
        <end position="533"/>
    </location>
</feature>
<feature type="strand" evidence="19">
    <location>
        <begin position="535"/>
        <end position="541"/>
    </location>
</feature>
<feature type="strand" evidence="19">
    <location>
        <begin position="546"/>
        <end position="551"/>
    </location>
</feature>
<feature type="strand" evidence="19">
    <location>
        <begin position="557"/>
        <end position="562"/>
    </location>
</feature>
<feature type="strand" evidence="19">
    <location>
        <begin position="565"/>
        <end position="577"/>
    </location>
</feature>
<feature type="turn" evidence="20">
    <location>
        <begin position="579"/>
        <end position="581"/>
    </location>
</feature>
<feature type="strand" evidence="19">
    <location>
        <begin position="583"/>
        <end position="588"/>
    </location>
</feature>
<feature type="strand" evidence="19">
    <location>
        <begin position="593"/>
        <end position="595"/>
    </location>
</feature>
<feature type="strand" evidence="19">
    <location>
        <begin position="599"/>
        <end position="601"/>
    </location>
</feature>
<feature type="strand" evidence="19">
    <location>
        <begin position="606"/>
        <end position="612"/>
    </location>
</feature>
<feature type="strand" evidence="19">
    <location>
        <begin position="614"/>
        <end position="617"/>
    </location>
</feature>
<feature type="strand" evidence="19">
    <location>
        <begin position="633"/>
        <end position="639"/>
    </location>
</feature>
<feature type="strand" evidence="19">
    <location>
        <begin position="642"/>
        <end position="646"/>
    </location>
</feature>
<feature type="helix" evidence="19">
    <location>
        <begin position="648"/>
        <end position="651"/>
    </location>
</feature>
<feature type="helix" evidence="19">
    <location>
        <begin position="660"/>
        <end position="662"/>
    </location>
</feature>
<feature type="strand" evidence="19">
    <location>
        <begin position="663"/>
        <end position="667"/>
    </location>
</feature>
<feature type="helix" evidence="19">
    <location>
        <begin position="669"/>
        <end position="680"/>
    </location>
</feature>
<feature type="helix" evidence="19">
    <location>
        <begin position="683"/>
        <end position="692"/>
    </location>
</feature>
<feature type="helix" evidence="19">
    <location>
        <begin position="696"/>
        <end position="708"/>
    </location>
</feature>
<feature type="helix" evidence="19">
    <location>
        <begin position="712"/>
        <end position="721"/>
    </location>
</feature>
<feature type="helix" evidence="19">
    <location>
        <begin position="725"/>
        <end position="734"/>
    </location>
</feature>
<feature type="helix" evidence="19">
    <location>
        <begin position="740"/>
        <end position="750"/>
    </location>
</feature>
<feature type="helix" evidence="19">
    <location>
        <begin position="754"/>
        <end position="763"/>
    </location>
</feature>
<feature type="helix" evidence="19">
    <location>
        <begin position="767"/>
        <end position="777"/>
    </location>
</feature>
<feature type="helix" evidence="19">
    <location>
        <begin position="780"/>
        <end position="789"/>
    </location>
</feature>
<feature type="strand" evidence="19">
    <location>
        <begin position="790"/>
        <end position="792"/>
    </location>
</feature>
<feature type="helix" evidence="19">
    <location>
        <begin position="796"/>
        <end position="812"/>
    </location>
</feature>
<feature type="helix" evidence="19">
    <location>
        <begin position="816"/>
        <end position="823"/>
    </location>
</feature>
<feature type="turn" evidence="19">
    <location>
        <begin position="824"/>
        <end position="827"/>
    </location>
</feature>
<feature type="helix" evidence="19">
    <location>
        <begin position="829"/>
        <end position="838"/>
    </location>
</feature>
<feature type="helix" evidence="19">
    <location>
        <begin position="842"/>
        <end position="851"/>
    </location>
</feature>
<feature type="helix" evidence="19">
    <location>
        <begin position="859"/>
        <end position="869"/>
    </location>
</feature>
<feature type="helix" evidence="19">
    <location>
        <begin position="872"/>
        <end position="881"/>
    </location>
</feature>
<feature type="helix" evidence="19">
    <location>
        <begin position="885"/>
        <end position="894"/>
    </location>
</feature>
<feature type="helix" evidence="19">
    <location>
        <begin position="898"/>
        <end position="903"/>
    </location>
</feature>
<feature type="helix" evidence="19">
    <location>
        <begin position="909"/>
        <end position="926"/>
    </location>
</feature>
<feature type="helix" evidence="19">
    <location>
        <begin position="930"/>
        <end position="939"/>
    </location>
</feature>
<feature type="helix" evidence="19">
    <location>
        <begin position="943"/>
        <end position="959"/>
    </location>
</feature>
<feature type="helix" evidence="19">
    <location>
        <begin position="964"/>
        <end position="984"/>
    </location>
</feature>
<feature type="helix" evidence="19">
    <location>
        <begin position="1019"/>
        <end position="1021"/>
    </location>
</feature>
<feature type="helix" evidence="19">
    <location>
        <begin position="1025"/>
        <end position="1041"/>
    </location>
</feature>
<feature type="helix" evidence="19">
    <location>
        <begin position="1045"/>
        <end position="1054"/>
    </location>
</feature>
<feature type="helix" evidence="19">
    <location>
        <begin position="1055"/>
        <end position="1058"/>
    </location>
</feature>
<feature type="turn" evidence="19">
    <location>
        <begin position="1059"/>
        <end position="1061"/>
    </location>
</feature>
<feature type="helix" evidence="19">
    <location>
        <begin position="1064"/>
        <end position="1078"/>
    </location>
</feature>
<feature type="helix" evidence="19">
    <location>
        <begin position="1081"/>
        <end position="1092"/>
    </location>
</feature>
<feature type="helix" evidence="19">
    <location>
        <begin position="1099"/>
        <end position="1115"/>
    </location>
</feature>
<feature type="strand" evidence="19">
    <location>
        <begin position="1118"/>
        <end position="1122"/>
    </location>
</feature>
<feature type="helix" evidence="19">
    <location>
        <begin position="1127"/>
        <end position="1130"/>
    </location>
</feature>
<feature type="turn" evidence="19">
    <location>
        <begin position="1141"/>
        <end position="1143"/>
    </location>
</feature>
<feature type="strand" evidence="19">
    <location>
        <begin position="1144"/>
        <end position="1146"/>
    </location>
</feature>
<feature type="turn" evidence="19">
    <location>
        <begin position="1156"/>
        <end position="1158"/>
    </location>
</feature>
<feature type="helix" evidence="19">
    <location>
        <begin position="1166"/>
        <end position="1169"/>
    </location>
</feature>
<feature type="turn" evidence="19">
    <location>
        <begin position="1174"/>
        <end position="1176"/>
    </location>
</feature>
<dbReference type="EMBL" id="AB037757">
    <property type="protein sequence ID" value="BAA92574.2"/>
    <property type="status" value="ALT_INIT"/>
    <property type="molecule type" value="mRNA"/>
</dbReference>
<dbReference type="EMBL" id="AK122917">
    <property type="protein sequence ID" value="BAG53797.1"/>
    <property type="molecule type" value="mRNA"/>
</dbReference>
<dbReference type="EMBL" id="AC079145">
    <property type="protein sequence ID" value="AAX88936.1"/>
    <property type="molecule type" value="Genomic_DNA"/>
</dbReference>
<dbReference type="EMBL" id="CH471053">
    <property type="protein sequence ID" value="EAX00841.1"/>
    <property type="molecule type" value="Genomic_DNA"/>
</dbReference>
<dbReference type="EMBL" id="BC036659">
    <property type="protein sequence ID" value="AAH36659.1"/>
    <property type="molecule type" value="mRNA"/>
</dbReference>
<dbReference type="CCDS" id="CCDS1695.1">
    <molecule id="Q9P2L0-2"/>
</dbReference>
<dbReference type="CCDS" id="CCDS33152.1">
    <molecule id="Q9P2L0-1"/>
</dbReference>
<dbReference type="RefSeq" id="NP_001006658.1">
    <molecule id="Q9P2L0-1"/>
    <property type="nucleotide sequence ID" value="NM_001006657.2"/>
</dbReference>
<dbReference type="RefSeq" id="NP_065830.2">
    <molecule id="Q9P2L0-2"/>
    <property type="nucleotide sequence ID" value="NM_020779.4"/>
</dbReference>
<dbReference type="PDB" id="8BBE">
    <property type="method" value="EM"/>
    <property type="resolution" value="3.50 A"/>
    <property type="chains" value="E=1-1181"/>
</dbReference>
<dbReference type="PDB" id="8BBG">
    <property type="method" value="EM"/>
    <property type="resolution" value="3.50 A"/>
    <property type="chains" value="E=1-1181"/>
</dbReference>
<dbReference type="PDB" id="8FGW">
    <property type="method" value="EM"/>
    <property type="resolution" value="3.70 A"/>
    <property type="chains" value="A=1-1181"/>
</dbReference>
<dbReference type="PDB" id="8FH3">
    <property type="method" value="EM"/>
    <property type="resolution" value="4.30 A"/>
    <property type="chains" value="A=1-1181"/>
</dbReference>
<dbReference type="PDBsum" id="8BBE"/>
<dbReference type="PDBsum" id="8BBG"/>
<dbReference type="PDBsum" id="8FGW"/>
<dbReference type="PDBsum" id="8FH3"/>
<dbReference type="EMDB" id="EMD-15954"/>
<dbReference type="EMDB" id="EMD-29073"/>
<dbReference type="EMDB" id="EMD-29078"/>
<dbReference type="SMR" id="Q9P2L0"/>
<dbReference type="BioGRID" id="121598">
    <property type="interactions" value="41"/>
</dbReference>
<dbReference type="ComplexPortal" id="CPX-5021">
    <property type="entry name" value="Intraflagellar transport complex A"/>
</dbReference>
<dbReference type="CORUM" id="Q9P2L0"/>
<dbReference type="FunCoup" id="Q9P2L0">
    <property type="interactions" value="660"/>
</dbReference>
<dbReference type="IntAct" id="Q9P2L0">
    <property type="interactions" value="25"/>
</dbReference>
<dbReference type="STRING" id="9606.ENSP00000314444"/>
<dbReference type="TCDB" id="1.X.1.1.1">
    <property type="family name" value="the intraflagellar transporter-a complex (ift-a) family"/>
</dbReference>
<dbReference type="GlyGen" id="Q9P2L0">
    <property type="glycosylation" value="2 sites, 1 N-linked glycan (1 site), 1 O-linked glycan (1 site)"/>
</dbReference>
<dbReference type="iPTMnet" id="Q9P2L0"/>
<dbReference type="PhosphoSitePlus" id="Q9P2L0"/>
<dbReference type="BioMuta" id="WDR35"/>
<dbReference type="DMDM" id="48474987"/>
<dbReference type="jPOST" id="Q9P2L0"/>
<dbReference type="MassIVE" id="Q9P2L0"/>
<dbReference type="PaxDb" id="9606-ENSP00000314444"/>
<dbReference type="PeptideAtlas" id="Q9P2L0"/>
<dbReference type="ProteomicsDB" id="83843">
    <molecule id="Q9P2L0-1"/>
</dbReference>
<dbReference type="ProteomicsDB" id="83844">
    <molecule id="Q9P2L0-2"/>
</dbReference>
<dbReference type="Pumba" id="Q9P2L0"/>
<dbReference type="Antibodypedia" id="50378">
    <property type="antibodies" value="60 antibodies from 22 providers"/>
</dbReference>
<dbReference type="DNASU" id="57539"/>
<dbReference type="Ensembl" id="ENST00000281405.9">
    <molecule id="Q9P2L0-2"/>
    <property type="protein sequence ID" value="ENSP00000281405.5"/>
    <property type="gene ID" value="ENSG00000118965.16"/>
</dbReference>
<dbReference type="Ensembl" id="ENST00000345530.8">
    <molecule id="Q9P2L0-1"/>
    <property type="protein sequence ID" value="ENSP00000314444.5"/>
    <property type="gene ID" value="ENSG00000118965.16"/>
</dbReference>
<dbReference type="GeneID" id="57539"/>
<dbReference type="KEGG" id="hsa:57539"/>
<dbReference type="MANE-Select" id="ENST00000281405.9">
    <molecule id="Q9P2L0-2"/>
    <property type="protein sequence ID" value="ENSP00000281405.5"/>
    <property type="RefSeq nucleotide sequence ID" value="NM_020779.4"/>
    <property type="RefSeq protein sequence ID" value="NP_065830.2"/>
</dbReference>
<dbReference type="UCSC" id="uc002rdi.5">
    <molecule id="Q9P2L0-1"/>
    <property type="organism name" value="human"/>
</dbReference>
<dbReference type="AGR" id="HGNC:29250"/>
<dbReference type="CTD" id="57539"/>
<dbReference type="DisGeNET" id="57539"/>
<dbReference type="GeneCards" id="WDR35"/>
<dbReference type="GeneReviews" id="WDR35"/>
<dbReference type="HGNC" id="HGNC:29250">
    <property type="gene designation" value="WDR35"/>
</dbReference>
<dbReference type="HPA" id="ENSG00000118965">
    <property type="expression patterns" value="Low tissue specificity"/>
</dbReference>
<dbReference type="MalaCards" id="WDR35"/>
<dbReference type="MIM" id="613602">
    <property type="type" value="gene"/>
</dbReference>
<dbReference type="MIM" id="613610">
    <property type="type" value="phenotype"/>
</dbReference>
<dbReference type="MIM" id="614091">
    <property type="type" value="phenotype"/>
</dbReference>
<dbReference type="neXtProt" id="NX_Q9P2L0"/>
<dbReference type="OpenTargets" id="ENSG00000118965"/>
<dbReference type="Orphanet" id="1515">
    <property type="disease" value="Cranioectodermal dysplasia"/>
</dbReference>
<dbReference type="Orphanet" id="498497">
    <property type="disease" value="Short rib-polydactyly syndrome type 5"/>
</dbReference>
<dbReference type="Orphanet" id="93271">
    <property type="disease" value="Short rib-polydactyly syndrome, Verma-Naumoff type"/>
</dbReference>
<dbReference type="PharmGKB" id="PA134928987"/>
<dbReference type="VEuPathDB" id="HostDB:ENSG00000118965"/>
<dbReference type="eggNOG" id="KOG2041">
    <property type="taxonomic scope" value="Eukaryota"/>
</dbReference>
<dbReference type="GeneTree" id="ENSGT00940000155745"/>
<dbReference type="InParanoid" id="Q9P2L0"/>
<dbReference type="OMA" id="VWAMCWA"/>
<dbReference type="OrthoDB" id="10260567at2759"/>
<dbReference type="PAN-GO" id="Q9P2L0">
    <property type="GO annotations" value="4 GO annotations based on evolutionary models"/>
</dbReference>
<dbReference type="PhylomeDB" id="Q9P2L0"/>
<dbReference type="TreeFam" id="TF314076"/>
<dbReference type="PathwayCommons" id="Q9P2L0"/>
<dbReference type="Reactome" id="R-HSA-5610787">
    <property type="pathway name" value="Hedgehog 'off' state"/>
</dbReference>
<dbReference type="Reactome" id="R-HSA-5620924">
    <property type="pathway name" value="Intraflagellar transport"/>
</dbReference>
<dbReference type="SignaLink" id="Q9P2L0"/>
<dbReference type="BioGRID-ORCS" id="57539">
    <property type="hits" value="17 hits in 1161 CRISPR screens"/>
</dbReference>
<dbReference type="ChiTaRS" id="WDR35">
    <property type="organism name" value="human"/>
</dbReference>
<dbReference type="GenomeRNAi" id="57539"/>
<dbReference type="Pharos" id="Q9P2L0">
    <property type="development level" value="Tbio"/>
</dbReference>
<dbReference type="PRO" id="PR:Q9P2L0"/>
<dbReference type="Proteomes" id="UP000005640">
    <property type="component" value="Chromosome 2"/>
</dbReference>
<dbReference type="RNAct" id="Q9P2L0">
    <property type="molecule type" value="protein"/>
</dbReference>
<dbReference type="Bgee" id="ENSG00000118965">
    <property type="expression patterns" value="Expressed in bronchial epithelial cell and 195 other cell types or tissues"/>
</dbReference>
<dbReference type="ExpressionAtlas" id="Q9P2L0">
    <property type="expression patterns" value="baseline and differential"/>
</dbReference>
<dbReference type="GO" id="GO:0005930">
    <property type="term" value="C:axoneme"/>
    <property type="evidence" value="ECO:0000250"/>
    <property type="project" value="UniProtKB"/>
</dbReference>
<dbReference type="GO" id="GO:0005813">
    <property type="term" value="C:centrosome"/>
    <property type="evidence" value="ECO:0000250"/>
    <property type="project" value="UniProtKB"/>
</dbReference>
<dbReference type="GO" id="GO:0036064">
    <property type="term" value="C:ciliary basal body"/>
    <property type="evidence" value="ECO:0000250"/>
    <property type="project" value="UniProtKB"/>
</dbReference>
<dbReference type="GO" id="GO:0097542">
    <property type="term" value="C:ciliary tip"/>
    <property type="evidence" value="ECO:0000304"/>
    <property type="project" value="Reactome"/>
</dbReference>
<dbReference type="GO" id="GO:0005929">
    <property type="term" value="C:cilium"/>
    <property type="evidence" value="ECO:0000304"/>
    <property type="project" value="Reactome"/>
</dbReference>
<dbReference type="GO" id="GO:0030991">
    <property type="term" value="C:intraciliary transport particle A"/>
    <property type="evidence" value="ECO:0000314"/>
    <property type="project" value="UniProtKB"/>
</dbReference>
<dbReference type="GO" id="GO:1990830">
    <property type="term" value="P:cellular response to leukemia inhibitory factor"/>
    <property type="evidence" value="ECO:0007669"/>
    <property type="project" value="Ensembl"/>
</dbReference>
<dbReference type="GO" id="GO:0060271">
    <property type="term" value="P:cilium assembly"/>
    <property type="evidence" value="ECO:0000315"/>
    <property type="project" value="UniProtKB"/>
</dbReference>
<dbReference type="GO" id="GO:0035721">
    <property type="term" value="P:intraciliary retrograde transport"/>
    <property type="evidence" value="ECO:0000315"/>
    <property type="project" value="MGI"/>
</dbReference>
<dbReference type="GO" id="GO:0042073">
    <property type="term" value="P:intraciliary transport"/>
    <property type="evidence" value="ECO:0000315"/>
    <property type="project" value="UniProtKB"/>
</dbReference>
<dbReference type="GO" id="GO:0061512">
    <property type="term" value="P:protein localization to cilium"/>
    <property type="evidence" value="ECO:0000315"/>
    <property type="project" value="UniProtKB"/>
</dbReference>
<dbReference type="FunFam" id="1.25.40.470:FF:000004">
    <property type="entry name" value="WD repeat-containing protein 35"/>
    <property type="match status" value="1"/>
</dbReference>
<dbReference type="FunFam" id="2.130.10.10:FF:000187">
    <property type="entry name" value="WD repeat-containing protein 35"/>
    <property type="match status" value="1"/>
</dbReference>
<dbReference type="Gene3D" id="1.25.40.470">
    <property type="match status" value="1"/>
</dbReference>
<dbReference type="Gene3D" id="2.130.10.10">
    <property type="entry name" value="YVTN repeat-like/Quinoprotein amine dehydrogenase"/>
    <property type="match status" value="2"/>
</dbReference>
<dbReference type="InterPro" id="IPR056158">
    <property type="entry name" value="Beta-prop_WDR35_2nd"/>
</dbReference>
<dbReference type="InterPro" id="IPR056159">
    <property type="entry name" value="Beta-prop_WDR35_TULP_N"/>
</dbReference>
<dbReference type="InterPro" id="IPR039857">
    <property type="entry name" value="Ift122/121"/>
</dbReference>
<dbReference type="InterPro" id="IPR056157">
    <property type="entry name" value="TPR_IFT80_172_dom"/>
</dbReference>
<dbReference type="InterPro" id="IPR015943">
    <property type="entry name" value="WD40/YVTN_repeat-like_dom_sf"/>
</dbReference>
<dbReference type="InterPro" id="IPR036322">
    <property type="entry name" value="WD40_repeat_dom_sf"/>
</dbReference>
<dbReference type="InterPro" id="IPR001680">
    <property type="entry name" value="WD40_rpt"/>
</dbReference>
<dbReference type="InterPro" id="IPR017233">
    <property type="entry name" value="WDR35"/>
</dbReference>
<dbReference type="InterPro" id="IPR056170">
    <property type="entry name" value="Znf_IFT121-like"/>
</dbReference>
<dbReference type="PANTHER" id="PTHR12764:SF5">
    <property type="entry name" value="LD29485P"/>
    <property type="match status" value="1"/>
</dbReference>
<dbReference type="PANTHER" id="PTHR12764">
    <property type="entry name" value="WD REPEAT DOMAIN-RELATED"/>
    <property type="match status" value="1"/>
</dbReference>
<dbReference type="Pfam" id="PF23390">
    <property type="entry name" value="Beta-prop_WDR35_2nd"/>
    <property type="match status" value="1"/>
</dbReference>
<dbReference type="Pfam" id="PF24797">
    <property type="entry name" value="Beta-prop_WDR35_TULP_N"/>
    <property type="match status" value="1"/>
</dbReference>
<dbReference type="Pfam" id="PF23387">
    <property type="entry name" value="TPR_IFT80_172"/>
    <property type="match status" value="1"/>
</dbReference>
<dbReference type="Pfam" id="PF25170">
    <property type="entry name" value="TPR_WDR35"/>
    <property type="match status" value="1"/>
</dbReference>
<dbReference type="Pfam" id="PF23145">
    <property type="entry name" value="Zf_2nd_IFT121"/>
    <property type="match status" value="1"/>
</dbReference>
<dbReference type="PIRSF" id="PIRSF037536">
    <property type="entry name" value="WD_repeat_p35"/>
    <property type="match status" value="1"/>
</dbReference>
<dbReference type="SMART" id="SM00320">
    <property type="entry name" value="WD40"/>
    <property type="match status" value="5"/>
</dbReference>
<dbReference type="SUPFAM" id="SSF82171">
    <property type="entry name" value="DPP6 N-terminal domain-like"/>
    <property type="match status" value="1"/>
</dbReference>
<dbReference type="SUPFAM" id="SSF50978">
    <property type="entry name" value="WD40 repeat-like"/>
    <property type="match status" value="1"/>
</dbReference>
<dbReference type="PROSITE" id="PS50082">
    <property type="entry name" value="WD_REPEATS_2"/>
    <property type="match status" value="1"/>
</dbReference>
<dbReference type="PROSITE" id="PS50294">
    <property type="entry name" value="WD_REPEATS_REGION"/>
    <property type="match status" value="1"/>
</dbReference>
<comment type="function">
    <text evidence="5 8 11 12">As a component of the IFT complex A (IFT-A), a complex required for retrograde ciliary transport and entry into cilia of G protein-coupled receptors (GPCRs), it is involved in ciliogenesis and ciliary protein trafficking (PubMed:21473986, PubMed:28400947, PubMed:29220510). May promote CASP3 activation and TNF-stimulated apoptosis.</text>
</comment>
<comment type="subunit">
    <text evidence="1 4 7 10 12">Component of the IFT complex A (IFT-A) complex (PubMed:20889716, PubMed:27932497, PubMed:29220510). IFT-A complex is divided into a core subcomplex composed of IFT122:IFT140:WDR19 which is associated with TULP3 and a peripheral subcomplex composed of IFT43:WDR35:TTC21B (PubMed:27932497, PubMed:29220510). Interacts directy with IFT122, ITF43 and TTC21B (PubMed:27932497, PubMed:29220510). Interacts with IFT43 (PubMed:19450523). Interacts with CFAP61 (By similarity).</text>
</comment>
<comment type="interaction">
    <interactant intactId="EBI-766448">
        <id>Q9P2L0</id>
    </interactant>
    <interactant intactId="EBI-10189681">
        <id>Q96FT9</id>
        <label>IFT43</label>
    </interactant>
    <organismsDiffer>false</organismsDiffer>
    <experiments>4</experiments>
</comment>
<comment type="subcellular location">
    <subcellularLocation>
        <location evidence="1">Cytoplasm</location>
        <location evidence="1">Cytoskeleton</location>
        <location evidence="1">Microtubule organizing center</location>
        <location evidence="1">Centrosome</location>
    </subcellularLocation>
    <subcellularLocation>
        <location evidence="1">Cytoplasm</location>
        <location evidence="1">Cytoskeleton</location>
        <location evidence="1">Cilium axoneme</location>
    </subcellularLocation>
    <subcellularLocation>
        <location evidence="1">Cytoplasm</location>
        <location evidence="1">Cytoskeleton</location>
        <location evidence="1">Cilium basal body</location>
    </subcellularLocation>
</comment>
<comment type="alternative products">
    <event type="alternative splicing"/>
    <isoform>
        <id>Q9P2L0-1</id>
        <name>1</name>
        <sequence type="displayed"/>
    </isoform>
    <isoform>
        <id>Q9P2L0-2</id>
        <name>2</name>
        <sequence type="described" ref="VSP_009732"/>
    </isoform>
</comment>
<comment type="induction">
    <text evidence="5">By TNF.</text>
</comment>
<comment type="disease" evidence="6">
    <disease id="DI-02916">
        <name>Cranioectodermal dysplasia 2</name>
        <acronym>CED2</acronym>
        <description>A disorder characterized by craniofacial, skeletal and ectodermal abnormalities. Clinical features include short stature, dolichocephaly, craniosynostosis, narrow thorax with pectus excavatum, short limbs, brachydactyly, joint laxity, narrow palpebral fissures, telecanthus with hypertelorism, low-set simple ears, everted lower lip, and short neck. Teeth abnormalities include widely spaced, hypoplastic and fused teeth.</description>
        <dbReference type="MIM" id="613610"/>
    </disease>
    <text>The disease is caused by variants affecting the gene represented in this entry.</text>
</comment>
<comment type="disease" evidence="8 11">
    <disease id="DI-03182">
        <name>Short-rib thoracic dysplasia 7 with or without polydactyly</name>
        <acronym>SRTD7</acronym>
        <description>A form of short-rib thoracic dysplasia, a group of autosomal recessive ciliopathies that are characterized by a constricted thoracic cage, short ribs, shortened tubular bones, and a 'trident' appearance of the acetabular roof. Polydactyly is variably present. Non-skeletal involvement can include cleft lip/palate as well as anomalies of major organs such as the brain, eye, heart, kidneys, liver, pancreas, intestines, and genitalia. Some forms of the disease are lethal in the neonatal period due to respiratory insufficiency secondary to a severely restricted thoracic cage, whereas others are compatible with life. Disease spectrum encompasses Ellis-van Creveld syndrome, asphyxiating thoracic dystrophy (Jeune syndrome), Mainzer-Saldino syndrome, and short rib-polydactyly syndrome. SRTD7 hallmarks are acromesomelic hypomineralization, campomelia, polysyndactyly, laterality defects, and cystic kidneys.</description>
        <dbReference type="MIM" id="614091"/>
    </disease>
    <text evidence="8">The disease is caused by variants affecting the gene represented in this entry. WDR35 mutations cause short rib-polydactyly syndrome through impaired cilia formation. Primary fibroblasts from SRTD7 patients lacking WDR35 fail to produce cilia (PubMed:21473986).</text>
</comment>
<comment type="disease" evidence="9">
    <disease id="DI-05258">
        <name>Short-rib thoracic dysplasia 7/20 with polydactyly, digenic</name>
        <acronym>SRTD7/20</acronym>
        <description>A digenic form of short-rib thoracic dysplasia caused by double heterozygosity for a mutation in the WDR35 gene and a mutation in the INTU gene. Short-rib thoracic dysplasia is part of a group of ciliopathies that are characterized by a constricted thoracic cage, short ribs, shortened tubular bones, and a 'trident' appearance of the acetabular roof. Polydactyly is variably present. Non-skeletal involvement can include cleft lip/palate as well as anomalies of major organs such as the brain, eye, heart, kidneys, liver, pancreas, intestines, and genitalia. Some forms of the disease are lethal in the neonatal period due to respiratory insufficiency secondary to a severely restricted thoracic cage, whereas others are compatible with life. Disease spectrum encompasses Ellis-van Creveld syndrome, asphyxiating thoracic dystrophy (Jeune syndrome), Mainzer-Saldino syndrome, and short rib-polydactyly syndrome.</description>
        <dbReference type="MIM" id="614091"/>
    </disease>
    <text evidence="9">The disease is caused by variants affecting distinct genetic loci, including the gene represented in this entry. SRTD7/20 can be caused by co-occurrence of WDR35 variant p.Trp311Leu and INTU p.Gln276Ter. One such patient has been reported.</text>
</comment>
<comment type="sequence caution" evidence="17">
    <conflict type="erroneous initiation">
        <sequence resource="EMBL-CDS" id="BAA92574"/>
    </conflict>
    <text>Extended N-terminus.</text>
</comment>
<keyword id="KW-0002">3D-structure</keyword>
<keyword id="KW-0025">Alternative splicing</keyword>
<keyword id="KW-0966">Cell projection</keyword>
<keyword id="KW-1186">Ciliopathy</keyword>
<keyword id="KW-0969">Cilium</keyword>
<keyword id="KW-0970">Cilium biogenesis/degradation</keyword>
<keyword id="KW-0963">Cytoplasm</keyword>
<keyword id="KW-0206">Cytoskeleton</keyword>
<keyword id="KW-0225">Disease variant</keyword>
<keyword id="KW-0038">Ectodermal dysplasia</keyword>
<keyword id="KW-1267">Proteomics identification</keyword>
<keyword id="KW-1185">Reference proteome</keyword>
<keyword id="KW-0677">Repeat</keyword>
<keyword id="KW-0853">WD repeat</keyword>
<evidence type="ECO:0000250" key="1">
    <source>
        <dbReference type="UniProtKB" id="Q8BND3"/>
    </source>
</evidence>
<evidence type="ECO:0000269" key="2">
    <source>
    </source>
</evidence>
<evidence type="ECO:0000269" key="3">
    <source>
    </source>
</evidence>
<evidence type="ECO:0000269" key="4">
    <source>
    </source>
</evidence>
<evidence type="ECO:0000269" key="5">
    <source>
    </source>
</evidence>
<evidence type="ECO:0000269" key="6">
    <source>
    </source>
</evidence>
<evidence type="ECO:0000269" key="7">
    <source>
    </source>
</evidence>
<evidence type="ECO:0000269" key="8">
    <source>
    </source>
</evidence>
<evidence type="ECO:0000269" key="9">
    <source>
    </source>
</evidence>
<evidence type="ECO:0000269" key="10">
    <source>
    </source>
</evidence>
<evidence type="ECO:0000269" key="11">
    <source>
    </source>
</evidence>
<evidence type="ECO:0000269" key="12">
    <source>
    </source>
</evidence>
<evidence type="ECO:0000303" key="13">
    <source>
    </source>
</evidence>
<evidence type="ECO:0000303" key="14">
    <source>
    </source>
</evidence>
<evidence type="ECO:0000303" key="15">
    <source>
    </source>
</evidence>
<evidence type="ECO:0000303" key="16">
    <source>
    </source>
</evidence>
<evidence type="ECO:0000305" key="17"/>
<evidence type="ECO:0000312" key="18">
    <source>
        <dbReference type="HGNC" id="HGNC:29250"/>
    </source>
</evidence>
<evidence type="ECO:0007829" key="19">
    <source>
        <dbReference type="PDB" id="8BBE"/>
    </source>
</evidence>
<evidence type="ECO:0007829" key="20">
    <source>
        <dbReference type="PDB" id="8BBG"/>
    </source>
</evidence>
<protein>
    <recommendedName>
        <fullName evidence="17">WD repeat-containing protein 35</fullName>
    </recommendedName>
    <alternativeName>
        <fullName>Intraflagellar transport protein 121 homolog</fullName>
    </alternativeName>
</protein>
<organism>
    <name type="scientific">Homo sapiens</name>
    <name type="common">Human</name>
    <dbReference type="NCBI Taxonomy" id="9606"/>
    <lineage>
        <taxon>Eukaryota</taxon>
        <taxon>Metazoa</taxon>
        <taxon>Chordata</taxon>
        <taxon>Craniata</taxon>
        <taxon>Vertebrata</taxon>
        <taxon>Euteleostomi</taxon>
        <taxon>Mammalia</taxon>
        <taxon>Eutheria</taxon>
        <taxon>Euarchontoglires</taxon>
        <taxon>Primates</taxon>
        <taxon>Haplorrhini</taxon>
        <taxon>Catarrhini</taxon>
        <taxon>Hominidae</taxon>
        <taxon>Homo</taxon>
    </lineage>
</organism>
<proteinExistence type="evidence at protein level"/>
<sequence>MFFYLSKKISIPNNVKLQCVSWNKEQGFIACGGEDGLLKVLKLETQTDDAKLRGLAAPSNLSMNQTLEGHSGSVQVVTWNEQYQKLTTSDENGLIIVWMLYKGSWIEEMINNRNKSVVRSMSWNADGQKICIVYEDGAVIVGSVDGNRIWGKDLKGIQLSHVTWSADSKVLLFGMANGEIHIYDNQGNFMIKMKLSCLVNVTGAISIAGIHWYHGTEGYVEPDCPCLAVCFDNGRCQIMRHENDQNPVLIDTGMYVVGIQWNHMGSVLAVAGFQKAAMQDKDVNIVQFYTPFGEHLGTLKVPGKEISALSWEGGGLKIALAVDSFIYFANIRPNYKWGYCSNTVVYAYTRPDRPEYCVVFWDTKNNEKYVKYVKGLISITTCGDFCILATKADENHPQEENEMETFGATFVLVLCNSIGTPLDPKYIDIVPLFVAMTKTHVIAASKEAFYTWQYRVAKKLTALEINQITRSRKEGRERIYHVDDTPSGSMDGVLDYSKTIQGTRDPICAITASDKILIVGRESGTIQRYSLPNVGLIQKYSLNCRAYQLSLNCNSSRLAIIDISGVLTFFDLDARVTDSTGQQVVGELLKLERRDVWDMKWAKDNPDLFAMMEKTRMYVFRNLDPEEPIQTSGYICNFEDLEIKSVLLDEILKDPEHPNKDYLINFEIRSLRDSRALIEKVGIKDASQFIEDNPHPRLWRLLAEAALQKLDLYTAEQAFVRCKDYQGIKFVKRLGKLLSESMKQAEVVGYFGRFEEAERTYLEMDRRDLAIGLRLKLGDWFRVLQLLKTGSGDADDSLLEQANNAIGDYFADRQKWLNAVQYYVQGRNQERLAECYYMLEDYEGLENLAISLPENHKLLPEIAQMFVRVGMCEQAVTAFLKCSQPKAAVDTCVHLNQWNKAVELAKNHSMKEIGSLLARYASHLLEKNKTLDAIELYRKANYFFDAAKLMFKIADEEAKKGSKPLRVKKLYVLSALLIEQYHEQMKNAQRGKVKGKSSEATSALAGLLEEEVLSTTDRFTDNAWRGAEAYHFFILAQRQLYEGCVDTALKTALHLKDYEDIIPPVEIYSLLALCACASRAFGTCSKAFIKLKSLETLSSEQKQQYEDLALEIFTKHTSKDNRKPELDSLMEGGEGKLPTCVATGSPITEYQFWMCSVCKHGVLAQEISHYSFCPLCHSPVG</sequence>
<name>WDR35_HUMAN</name>
<reference key="1">
    <citation type="journal article" date="2000" name="DNA Res.">
        <title>Prediction of the coding sequences of unidentified human genes. XVI. The complete sequences of 150 new cDNA clones from brain which code for large proteins in vitro.</title>
        <authorList>
            <person name="Nagase T."/>
            <person name="Kikuno R."/>
            <person name="Ishikawa K."/>
            <person name="Hirosawa M."/>
            <person name="Ohara O."/>
        </authorList>
    </citation>
    <scope>NUCLEOTIDE SEQUENCE [LARGE SCALE MRNA] (ISOFORM 1)</scope>
    <source>
        <tissue>Brain</tissue>
    </source>
</reference>
<reference key="2">
    <citation type="journal article" date="2002" name="DNA Res.">
        <title>Construction of expression-ready cDNA clones for KIAA genes: manual curation of 330 KIAA cDNA clones.</title>
        <authorList>
            <person name="Nakajima D."/>
            <person name="Okazaki N."/>
            <person name="Yamakawa H."/>
            <person name="Kikuno R."/>
            <person name="Ohara O."/>
            <person name="Nagase T."/>
        </authorList>
    </citation>
    <scope>SEQUENCE REVISION</scope>
</reference>
<reference key="3">
    <citation type="journal article" date="2004" name="Nat. Genet.">
        <title>Complete sequencing and characterization of 21,243 full-length human cDNAs.</title>
        <authorList>
            <person name="Ota T."/>
            <person name="Suzuki Y."/>
            <person name="Nishikawa T."/>
            <person name="Otsuki T."/>
            <person name="Sugiyama T."/>
            <person name="Irie R."/>
            <person name="Wakamatsu A."/>
            <person name="Hayashi K."/>
            <person name="Sato H."/>
            <person name="Nagai K."/>
            <person name="Kimura K."/>
            <person name="Makita H."/>
            <person name="Sekine M."/>
            <person name="Obayashi M."/>
            <person name="Nishi T."/>
            <person name="Shibahara T."/>
            <person name="Tanaka T."/>
            <person name="Ishii S."/>
            <person name="Yamamoto J."/>
            <person name="Saito K."/>
            <person name="Kawai Y."/>
            <person name="Isono Y."/>
            <person name="Nakamura Y."/>
            <person name="Nagahari K."/>
            <person name="Murakami K."/>
            <person name="Yasuda T."/>
            <person name="Iwayanagi T."/>
            <person name="Wagatsuma M."/>
            <person name="Shiratori A."/>
            <person name="Sudo H."/>
            <person name="Hosoiri T."/>
            <person name="Kaku Y."/>
            <person name="Kodaira H."/>
            <person name="Kondo H."/>
            <person name="Sugawara M."/>
            <person name="Takahashi M."/>
            <person name="Kanda K."/>
            <person name="Yokoi T."/>
            <person name="Furuya T."/>
            <person name="Kikkawa E."/>
            <person name="Omura Y."/>
            <person name="Abe K."/>
            <person name="Kamihara K."/>
            <person name="Katsuta N."/>
            <person name="Sato K."/>
            <person name="Tanikawa M."/>
            <person name="Yamazaki M."/>
            <person name="Ninomiya K."/>
            <person name="Ishibashi T."/>
            <person name="Yamashita H."/>
            <person name="Murakawa K."/>
            <person name="Fujimori K."/>
            <person name="Tanai H."/>
            <person name="Kimata M."/>
            <person name="Watanabe M."/>
            <person name="Hiraoka S."/>
            <person name="Chiba Y."/>
            <person name="Ishida S."/>
            <person name="Ono Y."/>
            <person name="Takiguchi S."/>
            <person name="Watanabe S."/>
            <person name="Yosida M."/>
            <person name="Hotuta T."/>
            <person name="Kusano J."/>
            <person name="Kanehori K."/>
            <person name="Takahashi-Fujii A."/>
            <person name="Hara H."/>
            <person name="Tanase T.-O."/>
            <person name="Nomura Y."/>
            <person name="Togiya S."/>
            <person name="Komai F."/>
            <person name="Hara R."/>
            <person name="Takeuchi K."/>
            <person name="Arita M."/>
            <person name="Imose N."/>
            <person name="Musashino K."/>
            <person name="Yuuki H."/>
            <person name="Oshima A."/>
            <person name="Sasaki N."/>
            <person name="Aotsuka S."/>
            <person name="Yoshikawa Y."/>
            <person name="Matsunawa H."/>
            <person name="Ichihara T."/>
            <person name="Shiohata N."/>
            <person name="Sano S."/>
            <person name="Moriya S."/>
            <person name="Momiyama H."/>
            <person name="Satoh N."/>
            <person name="Takami S."/>
            <person name="Terashima Y."/>
            <person name="Suzuki O."/>
            <person name="Nakagawa S."/>
            <person name="Senoh A."/>
            <person name="Mizoguchi H."/>
            <person name="Goto Y."/>
            <person name="Shimizu F."/>
            <person name="Wakebe H."/>
            <person name="Hishigaki H."/>
            <person name="Watanabe T."/>
            <person name="Sugiyama A."/>
            <person name="Takemoto M."/>
            <person name="Kawakami B."/>
            <person name="Yamazaki M."/>
            <person name="Watanabe K."/>
            <person name="Kumagai A."/>
            <person name="Itakura S."/>
            <person name="Fukuzumi Y."/>
            <person name="Fujimori Y."/>
            <person name="Komiyama M."/>
            <person name="Tashiro H."/>
            <person name="Tanigami A."/>
            <person name="Fujiwara T."/>
            <person name="Ono T."/>
            <person name="Yamada K."/>
            <person name="Fujii Y."/>
            <person name="Ozaki K."/>
            <person name="Hirao M."/>
            <person name="Ohmori Y."/>
            <person name="Kawabata A."/>
            <person name="Hikiji T."/>
            <person name="Kobatake N."/>
            <person name="Inagaki H."/>
            <person name="Ikema Y."/>
            <person name="Okamoto S."/>
            <person name="Okitani R."/>
            <person name="Kawakami T."/>
            <person name="Noguchi S."/>
            <person name="Itoh T."/>
            <person name="Shigeta K."/>
            <person name="Senba T."/>
            <person name="Matsumura K."/>
            <person name="Nakajima Y."/>
            <person name="Mizuno T."/>
            <person name="Morinaga M."/>
            <person name="Sasaki M."/>
            <person name="Togashi T."/>
            <person name="Oyama M."/>
            <person name="Hata H."/>
            <person name="Watanabe M."/>
            <person name="Komatsu T."/>
            <person name="Mizushima-Sugano J."/>
            <person name="Satoh T."/>
            <person name="Shirai Y."/>
            <person name="Takahashi Y."/>
            <person name="Nakagawa K."/>
            <person name="Okumura K."/>
            <person name="Nagase T."/>
            <person name="Nomura N."/>
            <person name="Kikuchi H."/>
            <person name="Masuho Y."/>
            <person name="Yamashita R."/>
            <person name="Nakai K."/>
            <person name="Yada T."/>
            <person name="Nakamura Y."/>
            <person name="Ohara O."/>
            <person name="Isogai T."/>
            <person name="Sugano S."/>
        </authorList>
    </citation>
    <scope>NUCLEOTIDE SEQUENCE [LARGE SCALE MRNA] (ISOFORM 2)</scope>
    <scope>VARIANT GLY-983</scope>
    <source>
        <tissue>Testis</tissue>
    </source>
</reference>
<reference key="4">
    <citation type="journal article" date="2005" name="Nature">
        <title>Generation and annotation of the DNA sequences of human chromosomes 2 and 4.</title>
        <authorList>
            <person name="Hillier L.W."/>
            <person name="Graves T.A."/>
            <person name="Fulton R.S."/>
            <person name="Fulton L.A."/>
            <person name="Pepin K.H."/>
            <person name="Minx P."/>
            <person name="Wagner-McPherson C."/>
            <person name="Layman D."/>
            <person name="Wylie K."/>
            <person name="Sekhon M."/>
            <person name="Becker M.C."/>
            <person name="Fewell G.A."/>
            <person name="Delehaunty K.D."/>
            <person name="Miner T.L."/>
            <person name="Nash W.E."/>
            <person name="Kremitzki C."/>
            <person name="Oddy L."/>
            <person name="Du H."/>
            <person name="Sun H."/>
            <person name="Bradshaw-Cordum H."/>
            <person name="Ali J."/>
            <person name="Carter J."/>
            <person name="Cordes M."/>
            <person name="Harris A."/>
            <person name="Isak A."/>
            <person name="van Brunt A."/>
            <person name="Nguyen C."/>
            <person name="Du F."/>
            <person name="Courtney L."/>
            <person name="Kalicki J."/>
            <person name="Ozersky P."/>
            <person name="Abbott S."/>
            <person name="Armstrong J."/>
            <person name="Belter E.A."/>
            <person name="Caruso L."/>
            <person name="Cedroni M."/>
            <person name="Cotton M."/>
            <person name="Davidson T."/>
            <person name="Desai A."/>
            <person name="Elliott G."/>
            <person name="Erb T."/>
            <person name="Fronick C."/>
            <person name="Gaige T."/>
            <person name="Haakenson W."/>
            <person name="Haglund K."/>
            <person name="Holmes A."/>
            <person name="Harkins R."/>
            <person name="Kim K."/>
            <person name="Kruchowski S.S."/>
            <person name="Strong C.M."/>
            <person name="Grewal N."/>
            <person name="Goyea E."/>
            <person name="Hou S."/>
            <person name="Levy A."/>
            <person name="Martinka S."/>
            <person name="Mead K."/>
            <person name="McLellan M.D."/>
            <person name="Meyer R."/>
            <person name="Randall-Maher J."/>
            <person name="Tomlinson C."/>
            <person name="Dauphin-Kohlberg S."/>
            <person name="Kozlowicz-Reilly A."/>
            <person name="Shah N."/>
            <person name="Swearengen-Shahid S."/>
            <person name="Snider J."/>
            <person name="Strong J.T."/>
            <person name="Thompson J."/>
            <person name="Yoakum M."/>
            <person name="Leonard S."/>
            <person name="Pearman C."/>
            <person name="Trani L."/>
            <person name="Radionenko M."/>
            <person name="Waligorski J.E."/>
            <person name="Wang C."/>
            <person name="Rock S.M."/>
            <person name="Tin-Wollam A.-M."/>
            <person name="Maupin R."/>
            <person name="Latreille P."/>
            <person name="Wendl M.C."/>
            <person name="Yang S.-P."/>
            <person name="Pohl C."/>
            <person name="Wallis J.W."/>
            <person name="Spieth J."/>
            <person name="Bieri T.A."/>
            <person name="Berkowicz N."/>
            <person name="Nelson J.O."/>
            <person name="Osborne J."/>
            <person name="Ding L."/>
            <person name="Meyer R."/>
            <person name="Sabo A."/>
            <person name="Shotland Y."/>
            <person name="Sinha P."/>
            <person name="Wohldmann P.E."/>
            <person name="Cook L.L."/>
            <person name="Hickenbotham M.T."/>
            <person name="Eldred J."/>
            <person name="Williams D."/>
            <person name="Jones T.A."/>
            <person name="She X."/>
            <person name="Ciccarelli F.D."/>
            <person name="Izaurralde E."/>
            <person name="Taylor J."/>
            <person name="Schmutz J."/>
            <person name="Myers R.M."/>
            <person name="Cox D.R."/>
            <person name="Huang X."/>
            <person name="McPherson J.D."/>
            <person name="Mardis E.R."/>
            <person name="Clifton S.W."/>
            <person name="Warren W.C."/>
            <person name="Chinwalla A.T."/>
            <person name="Eddy S.R."/>
            <person name="Marra M.A."/>
            <person name="Ovcharenko I."/>
            <person name="Furey T.S."/>
            <person name="Miller W."/>
            <person name="Eichler E.E."/>
            <person name="Bork P."/>
            <person name="Suyama M."/>
            <person name="Torrents D."/>
            <person name="Waterston R.H."/>
            <person name="Wilson R.K."/>
        </authorList>
    </citation>
    <scope>NUCLEOTIDE SEQUENCE [LARGE SCALE GENOMIC DNA]</scope>
</reference>
<reference key="5">
    <citation type="submission" date="2005-09" db="EMBL/GenBank/DDBJ databases">
        <authorList>
            <person name="Mural R.J."/>
            <person name="Istrail S."/>
            <person name="Sutton G.G."/>
            <person name="Florea L."/>
            <person name="Halpern A.L."/>
            <person name="Mobarry C.M."/>
            <person name="Lippert R."/>
            <person name="Walenz B."/>
            <person name="Shatkay H."/>
            <person name="Dew I."/>
            <person name="Miller J.R."/>
            <person name="Flanigan M.J."/>
            <person name="Edwards N.J."/>
            <person name="Bolanos R."/>
            <person name="Fasulo D."/>
            <person name="Halldorsson B.V."/>
            <person name="Hannenhalli S."/>
            <person name="Turner R."/>
            <person name="Yooseph S."/>
            <person name="Lu F."/>
            <person name="Nusskern D.R."/>
            <person name="Shue B.C."/>
            <person name="Zheng X.H."/>
            <person name="Zhong F."/>
            <person name="Delcher A.L."/>
            <person name="Huson D.H."/>
            <person name="Kravitz S.A."/>
            <person name="Mouchard L."/>
            <person name="Reinert K."/>
            <person name="Remington K.A."/>
            <person name="Clark A.G."/>
            <person name="Waterman M.S."/>
            <person name="Eichler E.E."/>
            <person name="Adams M.D."/>
            <person name="Hunkapiller M.W."/>
            <person name="Myers E.W."/>
            <person name="Venter J.C."/>
        </authorList>
    </citation>
    <scope>NUCLEOTIDE SEQUENCE [LARGE SCALE GENOMIC DNA]</scope>
</reference>
<reference key="6">
    <citation type="journal article" date="2004" name="Genome Res.">
        <title>The status, quality, and expansion of the NIH full-length cDNA project: the Mammalian Gene Collection (MGC).</title>
        <authorList>
            <consortium name="The MGC Project Team"/>
        </authorList>
    </citation>
    <scope>NUCLEOTIDE SEQUENCE [LARGE SCALE MRNA] (ISOFORM 2)</scope>
    <scope>VARIANT THR-878</scope>
    <source>
        <tissue>Testis</tissue>
    </source>
</reference>
<reference key="7">
    <citation type="journal article" date="2009" name="Cell">
        <title>SnapShot: Intraflagellar transport.</title>
        <authorList>
            <person name="Cole D.G."/>
            <person name="Snell W.J."/>
        </authorList>
    </citation>
    <scope>INTERACTION WITH IFT43</scope>
</reference>
<reference key="8">
    <citation type="journal article" date="2010" name="Biochem. Biophys. Res. Commun.">
        <title>Naofen, a novel WD40-repeat protein, mediates spontaneous and tumor necrosis factor-induced apoptosis.</title>
        <authorList>
            <person name="Feng G.G."/>
            <person name="Li C."/>
            <person name="Huang L."/>
            <person name="Tsunekawa K."/>
            <person name="Sato Y."/>
            <person name="Fujiwara Y."/>
            <person name="Komatsu T."/>
            <person name="Honda T."/>
            <person name="Fan J.H."/>
            <person name="Goto H."/>
            <person name="Koide T."/>
            <person name="Hasegawa T."/>
            <person name="Ishikawa N."/>
        </authorList>
    </citation>
    <scope>FUNCTION</scope>
    <scope>INDUCTION</scope>
</reference>
<reference key="9">
    <citation type="journal article" date="2010" name="Genes Dev.">
        <title>TULP3 bridges the IFT-A complex and membrane phosphoinositides to promote trafficking of G protein-coupled receptors into primary cilia.</title>
        <authorList>
            <person name="Mukhopadhyay S."/>
            <person name="Wen X."/>
            <person name="Chih B."/>
            <person name="Nelson C.D."/>
            <person name="Lane W.S."/>
            <person name="Scales S.J."/>
            <person name="Jackson P.K."/>
        </authorList>
    </citation>
    <scope>IDENTIFICATION IN THE IFT-A COMPLEX</scope>
</reference>
<reference key="10">
    <citation type="journal article" date="2017" name="Mol. Biol. Cell">
        <title>Intraflagellar transport-A complex mediates ciliary entry and retrograde trafficking of ciliary G protein-coupled receptors.</title>
        <authorList>
            <person name="Hirano T."/>
            <person name="Katoh Y."/>
            <person name="Nakayama K."/>
        </authorList>
    </citation>
    <scope>IDENTIFICATION IN THE IFT-A COMPLEX</scope>
</reference>
<reference key="11">
    <citation type="journal article" date="2018" name="Hum. Mol. Genet.">
        <title>Ciliopathy-associated mutations of IFT122 impair ciliary protein trafficking but not ciliogenesis.</title>
        <authorList>
            <person name="Takahara M."/>
            <person name="Katoh Y."/>
            <person name="Nakamura K."/>
            <person name="Hirano T."/>
            <person name="Sugawa M."/>
            <person name="Tsurumi Y."/>
            <person name="Nakayama K."/>
        </authorList>
    </citation>
    <scope>FUNCTION</scope>
    <scope>IDENTIFICATION IN THE IFT-A COMPLEX</scope>
</reference>
<reference key="12">
    <citation type="journal article" date="2011" name="Am. J. Hum. Genet.">
        <title>Human and mouse mutations in WDR35 cause short-rib polydactyly syndromes due to abnormal ciliogenesis.</title>
        <authorList>
            <person name="Mill P."/>
            <person name="Lockhart P.J."/>
            <person name="Fitzpatrick E."/>
            <person name="Mountford H.S."/>
            <person name="Hall E.A."/>
            <person name="Reijns M.A."/>
            <person name="Keighren M."/>
            <person name="Bahlo M."/>
            <person name="Bromhead C.J."/>
            <person name="Budd P."/>
            <person name="Aftimos S."/>
            <person name="Delatycki M.B."/>
            <person name="Savarirayan R."/>
            <person name="Jackson I.J."/>
            <person name="Amor D.J."/>
        </authorList>
    </citation>
    <scope>FUNCTION</scope>
    <scope>VARIANT SRTD7 ARG-261</scope>
</reference>
<reference key="13">
    <citation type="journal article" date="2010" name="Am. J. Hum. Genet.">
        <title>Exome sequencing identifies WDR35 variants involved in Sensenbrenner syndrome.</title>
        <authorList>
            <person name="Gilissen C."/>
            <person name="Arts H.H."/>
            <person name="Hoischen A."/>
            <person name="Spruijt L."/>
            <person name="Mans D.A."/>
            <person name="Arts P."/>
            <person name="van Lier B."/>
            <person name="Steehouwer M."/>
            <person name="van Reeuwijk J."/>
            <person name="Kant S.G."/>
            <person name="Roepman R."/>
            <person name="Knoers N.V."/>
            <person name="Veltman J.A."/>
            <person name="Brunner H.G."/>
        </authorList>
    </citation>
    <scope>VARIANTS CED2 GLY-626 AND THR-875</scope>
</reference>
<reference key="14">
    <citation type="journal article" date="2016" name="Nat. Genet.">
        <title>The ciliopathy-associated CPLANE proteins direct basal body recruitment of intraflagellar transport machinery.</title>
        <authorList>
            <person name="Toriyama M."/>
            <person name="Lee C."/>
            <person name="Taylor S.P."/>
            <person name="Duran I."/>
            <person name="Cohn D.H."/>
            <person name="Bruel A.L."/>
            <person name="Tabler J.M."/>
            <person name="Drew K."/>
            <person name="Kelly M.R."/>
            <person name="Kim S."/>
            <person name="Park T.J."/>
            <person name="Braun D.A."/>
            <person name="Pierquin G."/>
            <person name="Biver A."/>
            <person name="Wagner K."/>
            <person name="Malfroot A."/>
            <person name="Panigrahi I."/>
            <person name="Franco B."/>
            <person name="Al-Lami H.A."/>
            <person name="Yeung Y."/>
            <person name="Choi Y.J."/>
            <person name="Duffourd Y."/>
            <person name="Faivre L."/>
            <person name="Riviere J.B."/>
            <person name="Chen J."/>
            <person name="Liu K.J."/>
            <person name="Marcotte E.M."/>
            <person name="Hildebrandt F."/>
            <person name="Thauvin-Robinet C."/>
            <person name="Krakow D."/>
            <person name="Jackson P.K."/>
            <person name="Wallingford J.B."/>
        </authorList>
    </citation>
    <scope>VARIANT SRTD7/20 LEU-311</scope>
</reference>
<reference key="15">
    <citation type="journal article" date="2017" name="Cilia">
        <title>Mutations in IFT-A satellite core component genes IFT43 and IFT121 produce short rib polydactyly syndrome with distinctive campomelia.</title>
        <authorList>
            <person name="Duran I."/>
            <person name="Taylor S.P."/>
            <person name="Zhang W."/>
            <person name="Martin J."/>
            <person name="Qureshi F."/>
            <person name="Jacques S.M."/>
            <person name="Wallerstein R."/>
            <person name="Lachman R.S."/>
            <person name="Nickerson D.A."/>
            <person name="Bamshad M."/>
            <person name="Cohn D.H."/>
            <person name="Krakow D."/>
        </authorList>
    </citation>
    <scope>VARIANTS SRTD7 LEU-311; LYS-478 AND 527-GLN--GLY-1181 DEL</scope>
    <scope>CHARACTERIZATION OF VARIANTS SRTD7 LEU-311; LYS-478 AND 527-GLN--GLY-1181 DEL</scope>
    <scope>FUNCTION</scope>
</reference>
<accession>Q9P2L0</accession>
<accession>B3KVI5</accession>
<accession>Q4ZG01</accession>
<accession>Q8NE11</accession>
<gene>
    <name evidence="18" type="primary">WDR35</name>
    <name evidence="15 16" type="synonym">IFT121</name>
    <name type="synonym">KIAA1336</name>
</gene>